<dbReference type="EMBL" id="CP000789">
    <property type="protein sequence ID" value="ABU69998.1"/>
    <property type="molecule type" value="Genomic_DNA"/>
</dbReference>
<dbReference type="RefSeq" id="WP_005425333.1">
    <property type="nucleotide sequence ID" value="NC_022269.1"/>
</dbReference>
<dbReference type="SMR" id="A7MTC2"/>
<dbReference type="GeneID" id="67378372"/>
<dbReference type="KEGG" id="vha:VIBHAR_00999"/>
<dbReference type="PATRIC" id="fig|338187.25.peg.1621"/>
<dbReference type="Proteomes" id="UP000008152">
    <property type="component" value="Chromosome I"/>
</dbReference>
<dbReference type="GO" id="GO:0005737">
    <property type="term" value="C:cytoplasm"/>
    <property type="evidence" value="ECO:0007669"/>
    <property type="project" value="UniProtKB-SubCell"/>
</dbReference>
<dbReference type="GO" id="GO:0003700">
    <property type="term" value="F:DNA-binding transcription factor activity"/>
    <property type="evidence" value="ECO:0007669"/>
    <property type="project" value="InterPro"/>
</dbReference>
<dbReference type="GO" id="GO:0043565">
    <property type="term" value="F:sequence-specific DNA binding"/>
    <property type="evidence" value="ECO:0007669"/>
    <property type="project" value="InterPro"/>
</dbReference>
<dbReference type="GO" id="GO:0045892">
    <property type="term" value="P:negative regulation of DNA-templated transcription"/>
    <property type="evidence" value="ECO:0007669"/>
    <property type="project" value="UniProtKB-UniRule"/>
</dbReference>
<dbReference type="Gene3D" id="1.10.1270.10">
    <property type="entry name" value="TrpR-like"/>
    <property type="match status" value="1"/>
</dbReference>
<dbReference type="HAMAP" id="MF_00475">
    <property type="entry name" value="Trp_repressor"/>
    <property type="match status" value="1"/>
</dbReference>
<dbReference type="InterPro" id="IPR000831">
    <property type="entry name" value="Trp_repress"/>
</dbReference>
<dbReference type="InterPro" id="IPR013335">
    <property type="entry name" value="Trp_repress_bac"/>
</dbReference>
<dbReference type="InterPro" id="IPR010921">
    <property type="entry name" value="Trp_repressor/repl_initiator"/>
</dbReference>
<dbReference type="InterPro" id="IPR038116">
    <property type="entry name" value="TrpR-like_sf"/>
</dbReference>
<dbReference type="NCBIfam" id="TIGR01321">
    <property type="entry name" value="TrpR"/>
    <property type="match status" value="1"/>
</dbReference>
<dbReference type="PANTHER" id="PTHR38025">
    <property type="entry name" value="TRP OPERON REPRESSOR"/>
    <property type="match status" value="1"/>
</dbReference>
<dbReference type="PANTHER" id="PTHR38025:SF1">
    <property type="entry name" value="TRP OPERON REPRESSOR"/>
    <property type="match status" value="1"/>
</dbReference>
<dbReference type="Pfam" id="PF01371">
    <property type="entry name" value="Trp_repressor"/>
    <property type="match status" value="1"/>
</dbReference>
<dbReference type="PIRSF" id="PIRSF003196">
    <property type="entry name" value="Trp_repressor"/>
    <property type="match status" value="1"/>
</dbReference>
<dbReference type="SUPFAM" id="SSF48295">
    <property type="entry name" value="TrpR-like"/>
    <property type="match status" value="1"/>
</dbReference>
<protein>
    <recommendedName>
        <fullName evidence="1">Trp operon repressor homolog</fullName>
    </recommendedName>
</protein>
<accession>A7MTC2</accession>
<organism>
    <name type="scientific">Vibrio campbellii (strain ATCC BAA-1116)</name>
    <dbReference type="NCBI Taxonomy" id="2902295"/>
    <lineage>
        <taxon>Bacteria</taxon>
        <taxon>Pseudomonadati</taxon>
        <taxon>Pseudomonadota</taxon>
        <taxon>Gammaproteobacteria</taxon>
        <taxon>Vibrionales</taxon>
        <taxon>Vibrionaceae</taxon>
        <taxon>Vibrio</taxon>
    </lineage>
</organism>
<name>TRPR_VIBC1</name>
<sequence length="100" mass="11411">MSHEPEYKDWQQIVELIRSSVDNQQHEMLLTMLMTPDERESLTARVNILNELLKGELSQRQISQMLGVGIATITRGSNELKSKSDTDKDKLKTLLEQGAQ</sequence>
<reference key="1">
    <citation type="submission" date="2007-08" db="EMBL/GenBank/DDBJ databases">
        <authorList>
            <consortium name="The Vibrio harveyi Genome Sequencing Project"/>
            <person name="Bassler B."/>
            <person name="Clifton S.W."/>
            <person name="Fulton L."/>
            <person name="Delehaunty K."/>
            <person name="Fronick C."/>
            <person name="Harrison M."/>
            <person name="Markivic C."/>
            <person name="Fulton R."/>
            <person name="Tin-Wollam A.-M."/>
            <person name="Shah N."/>
            <person name="Pepin K."/>
            <person name="Nash W."/>
            <person name="Thiruvilangam P."/>
            <person name="Bhonagiri V."/>
            <person name="Waters C."/>
            <person name="Tu K.C."/>
            <person name="Irgon J."/>
            <person name="Wilson R.K."/>
        </authorList>
    </citation>
    <scope>NUCLEOTIDE SEQUENCE [LARGE SCALE GENOMIC DNA]</scope>
    <source>
        <strain>ATCC BAA-1116 / BB120</strain>
    </source>
</reference>
<proteinExistence type="inferred from homology"/>
<comment type="function">
    <text evidence="1">This protein is an aporepressor. When complexed with L-tryptophan it binds the operator region of the trp operon and prevents the initiation of transcription.</text>
</comment>
<comment type="subunit">
    <text evidence="1">Homodimer.</text>
</comment>
<comment type="subcellular location">
    <subcellularLocation>
        <location evidence="1">Cytoplasm</location>
    </subcellularLocation>
</comment>
<comment type="similarity">
    <text evidence="1">Belongs to the TrpR family.</text>
</comment>
<keyword id="KW-0963">Cytoplasm</keyword>
<keyword id="KW-0238">DNA-binding</keyword>
<keyword id="KW-0678">Repressor</keyword>
<keyword id="KW-0804">Transcription</keyword>
<keyword id="KW-0805">Transcription regulation</keyword>
<gene>
    <name evidence="1" type="primary">trpR</name>
    <name type="ordered locus">VIBHAR_00999</name>
</gene>
<evidence type="ECO:0000255" key="1">
    <source>
        <dbReference type="HAMAP-Rule" id="MF_00475"/>
    </source>
</evidence>
<evidence type="ECO:0000256" key="2">
    <source>
        <dbReference type="SAM" id="MobiDB-lite"/>
    </source>
</evidence>
<feature type="chain" id="PRO_1000014053" description="Trp operon repressor homolog">
    <location>
        <begin position="1"/>
        <end position="100"/>
    </location>
</feature>
<feature type="DNA-binding region" evidence="1">
    <location>
        <begin position="59"/>
        <end position="82"/>
    </location>
</feature>
<feature type="region of interest" description="Disordered" evidence="2">
    <location>
        <begin position="78"/>
        <end position="100"/>
    </location>
</feature>
<feature type="compositionally biased region" description="Basic and acidic residues" evidence="2">
    <location>
        <begin position="78"/>
        <end position="93"/>
    </location>
</feature>